<sequence length="372" mass="40875">MNKKDYYDLLEVSRNASTDEIKKAYKKLALKYHPDRNPGNKEAEEKFKEVTAAYEVLSDSEKRAGYDRYGHDGASGGFDFSQAGGDFSDIFNDFFGGGFGGSTSRSRTKRSTTGVSGADLRYDLKITLEDAFKGIQAPIHYVTNIKCNTCQGTGSEGAIKPVQCNTCQGSGRIRTQQGFFTIERTCTTCYGEGEIIQNKCKKCGGSGRKRDEVNISVSIPKGIEEGAKVRVSGKGEAGARGGKSGDLYVCVKIATHQIFTRNRADLHCKVPIRMTLAVLGGEIDIQSIDGAKIKVKVPEGTQTGTKLRCREKGMPYMNSHARGDLYVQVIVETLNPKNLTQKQIELLKALEEEEHESVEQKSEGFFGKVKKK</sequence>
<comment type="function">
    <text evidence="1">Participates actively in the response to hyperosmotic and heat shock by preventing the aggregation of stress-denatured proteins and by disaggregating proteins, also in an autonomous, DnaK-independent fashion. Unfolded proteins bind initially to DnaJ; upon interaction with the DnaJ-bound protein, DnaK hydrolyzes its bound ATP, resulting in the formation of a stable complex. GrpE releases ADP from DnaK; ATP binding to DnaK triggers the release of the substrate protein, thus completing the reaction cycle. Several rounds of ATP-dependent interactions between DnaJ, DnaK and GrpE are required for fully efficient folding. Also involved, together with DnaK and GrpE, in the DNA replication of plasmids through activation of initiation proteins.</text>
</comment>
<comment type="cofactor">
    <cofactor evidence="1">
        <name>Zn(2+)</name>
        <dbReference type="ChEBI" id="CHEBI:29105"/>
    </cofactor>
    <text evidence="1">Binds 2 Zn(2+) ions per monomer.</text>
</comment>
<comment type="subunit">
    <text evidence="1">Homodimer.</text>
</comment>
<comment type="subcellular location">
    <subcellularLocation>
        <location evidence="1">Cytoplasm</location>
    </subcellularLocation>
</comment>
<comment type="domain">
    <text evidence="1">The J domain is necessary and sufficient to stimulate DnaK ATPase activity. Zinc center 1 plays an important role in the autonomous, DnaK-independent chaperone activity of DnaJ. Zinc center 2 is essential for interaction with DnaK and for DnaJ activity.</text>
</comment>
<comment type="similarity">
    <text evidence="1">Belongs to the DnaJ family.</text>
</comment>
<keyword id="KW-0143">Chaperone</keyword>
<keyword id="KW-0963">Cytoplasm</keyword>
<keyword id="KW-0235">DNA replication</keyword>
<keyword id="KW-0479">Metal-binding</keyword>
<keyword id="KW-0677">Repeat</keyword>
<keyword id="KW-0346">Stress response</keyword>
<keyword id="KW-0862">Zinc</keyword>
<keyword id="KW-0863">Zinc-finger</keyword>
<reference key="1">
    <citation type="journal article" date="2008" name="Mol. Biol. Evol.">
        <title>Genome evolution of Wolbachia strain wPip from the Culex pipiens group.</title>
        <authorList>
            <person name="Klasson L."/>
            <person name="Walker T."/>
            <person name="Sebaihia M."/>
            <person name="Sanders M.J."/>
            <person name="Quail M.A."/>
            <person name="Lord A."/>
            <person name="Sanders S."/>
            <person name="Earl J."/>
            <person name="O'Neill S.L."/>
            <person name="Thomson N."/>
            <person name="Sinkins S.P."/>
            <person name="Parkhill J."/>
        </authorList>
    </citation>
    <scope>NUCLEOTIDE SEQUENCE [LARGE SCALE GENOMIC DNA]</scope>
    <source>
        <strain>wPip</strain>
    </source>
</reference>
<accession>B3CP03</accession>
<evidence type="ECO:0000255" key="1">
    <source>
        <dbReference type="HAMAP-Rule" id="MF_01152"/>
    </source>
</evidence>
<feature type="chain" id="PRO_1000137736" description="Chaperone protein DnaJ">
    <location>
        <begin position="1"/>
        <end position="372"/>
    </location>
</feature>
<feature type="domain" description="J" evidence="1">
    <location>
        <begin position="5"/>
        <end position="70"/>
    </location>
</feature>
<feature type="repeat" description="CXXCXGXG motif">
    <location>
        <begin position="147"/>
        <end position="154"/>
    </location>
</feature>
<feature type="repeat" description="CXXCXGXG motif">
    <location>
        <begin position="164"/>
        <end position="171"/>
    </location>
</feature>
<feature type="repeat" description="CXXCXGXG motif">
    <location>
        <begin position="186"/>
        <end position="193"/>
    </location>
</feature>
<feature type="repeat" description="CXXCXGXG motif">
    <location>
        <begin position="200"/>
        <end position="207"/>
    </location>
</feature>
<feature type="zinc finger region" description="CR-type" evidence="1">
    <location>
        <begin position="134"/>
        <end position="212"/>
    </location>
</feature>
<feature type="binding site" evidence="1">
    <location>
        <position position="147"/>
    </location>
    <ligand>
        <name>Zn(2+)</name>
        <dbReference type="ChEBI" id="CHEBI:29105"/>
        <label>1</label>
    </ligand>
</feature>
<feature type="binding site" evidence="1">
    <location>
        <position position="150"/>
    </location>
    <ligand>
        <name>Zn(2+)</name>
        <dbReference type="ChEBI" id="CHEBI:29105"/>
        <label>1</label>
    </ligand>
</feature>
<feature type="binding site" evidence="1">
    <location>
        <position position="164"/>
    </location>
    <ligand>
        <name>Zn(2+)</name>
        <dbReference type="ChEBI" id="CHEBI:29105"/>
        <label>2</label>
    </ligand>
</feature>
<feature type="binding site" evidence="1">
    <location>
        <position position="167"/>
    </location>
    <ligand>
        <name>Zn(2+)</name>
        <dbReference type="ChEBI" id="CHEBI:29105"/>
        <label>2</label>
    </ligand>
</feature>
<feature type="binding site" evidence="1">
    <location>
        <position position="186"/>
    </location>
    <ligand>
        <name>Zn(2+)</name>
        <dbReference type="ChEBI" id="CHEBI:29105"/>
        <label>2</label>
    </ligand>
</feature>
<feature type="binding site" evidence="1">
    <location>
        <position position="189"/>
    </location>
    <ligand>
        <name>Zn(2+)</name>
        <dbReference type="ChEBI" id="CHEBI:29105"/>
        <label>2</label>
    </ligand>
</feature>
<feature type="binding site" evidence="1">
    <location>
        <position position="200"/>
    </location>
    <ligand>
        <name>Zn(2+)</name>
        <dbReference type="ChEBI" id="CHEBI:29105"/>
        <label>1</label>
    </ligand>
</feature>
<feature type="binding site" evidence="1">
    <location>
        <position position="203"/>
    </location>
    <ligand>
        <name>Zn(2+)</name>
        <dbReference type="ChEBI" id="CHEBI:29105"/>
        <label>1</label>
    </ligand>
</feature>
<organism>
    <name type="scientific">Wolbachia pipientis subsp. Culex pipiens (strain wPip)</name>
    <dbReference type="NCBI Taxonomy" id="570417"/>
    <lineage>
        <taxon>Bacteria</taxon>
        <taxon>Pseudomonadati</taxon>
        <taxon>Pseudomonadota</taxon>
        <taxon>Alphaproteobacteria</taxon>
        <taxon>Rickettsiales</taxon>
        <taxon>Anaplasmataceae</taxon>
        <taxon>Wolbachieae</taxon>
        <taxon>Wolbachia</taxon>
    </lineage>
</organism>
<proteinExistence type="inferred from homology"/>
<dbReference type="EMBL" id="AM999887">
    <property type="protein sequence ID" value="CAQ54330.1"/>
    <property type="molecule type" value="Genomic_DNA"/>
</dbReference>
<dbReference type="RefSeq" id="WP_012481762.1">
    <property type="nucleotide sequence ID" value="NC_010981.1"/>
</dbReference>
<dbReference type="SMR" id="B3CP03"/>
<dbReference type="KEGG" id="wpi:WP0222"/>
<dbReference type="eggNOG" id="COG0484">
    <property type="taxonomic scope" value="Bacteria"/>
</dbReference>
<dbReference type="HOGENOM" id="CLU_017633_0_7_5"/>
<dbReference type="Proteomes" id="UP000008814">
    <property type="component" value="Chromosome"/>
</dbReference>
<dbReference type="GO" id="GO:0005737">
    <property type="term" value="C:cytoplasm"/>
    <property type="evidence" value="ECO:0007669"/>
    <property type="project" value="UniProtKB-SubCell"/>
</dbReference>
<dbReference type="GO" id="GO:0005524">
    <property type="term" value="F:ATP binding"/>
    <property type="evidence" value="ECO:0007669"/>
    <property type="project" value="InterPro"/>
</dbReference>
<dbReference type="GO" id="GO:0031072">
    <property type="term" value="F:heat shock protein binding"/>
    <property type="evidence" value="ECO:0007669"/>
    <property type="project" value="InterPro"/>
</dbReference>
<dbReference type="GO" id="GO:0051082">
    <property type="term" value="F:unfolded protein binding"/>
    <property type="evidence" value="ECO:0007669"/>
    <property type="project" value="UniProtKB-UniRule"/>
</dbReference>
<dbReference type="GO" id="GO:0008270">
    <property type="term" value="F:zinc ion binding"/>
    <property type="evidence" value="ECO:0007669"/>
    <property type="project" value="UniProtKB-UniRule"/>
</dbReference>
<dbReference type="GO" id="GO:0051085">
    <property type="term" value="P:chaperone cofactor-dependent protein refolding"/>
    <property type="evidence" value="ECO:0007669"/>
    <property type="project" value="TreeGrafter"/>
</dbReference>
<dbReference type="GO" id="GO:0006260">
    <property type="term" value="P:DNA replication"/>
    <property type="evidence" value="ECO:0007669"/>
    <property type="project" value="UniProtKB-KW"/>
</dbReference>
<dbReference type="GO" id="GO:0042026">
    <property type="term" value="P:protein refolding"/>
    <property type="evidence" value="ECO:0007669"/>
    <property type="project" value="TreeGrafter"/>
</dbReference>
<dbReference type="GO" id="GO:0009408">
    <property type="term" value="P:response to heat"/>
    <property type="evidence" value="ECO:0007669"/>
    <property type="project" value="InterPro"/>
</dbReference>
<dbReference type="CDD" id="cd06257">
    <property type="entry name" value="DnaJ"/>
    <property type="match status" value="1"/>
</dbReference>
<dbReference type="CDD" id="cd10747">
    <property type="entry name" value="DnaJ_C"/>
    <property type="match status" value="1"/>
</dbReference>
<dbReference type="CDD" id="cd10719">
    <property type="entry name" value="DnaJ_zf"/>
    <property type="match status" value="1"/>
</dbReference>
<dbReference type="FunFam" id="1.10.287.110:FF:000034">
    <property type="entry name" value="Chaperone protein DnaJ"/>
    <property type="match status" value="1"/>
</dbReference>
<dbReference type="FunFam" id="2.10.230.10:FF:000002">
    <property type="entry name" value="Molecular chaperone DnaJ"/>
    <property type="match status" value="1"/>
</dbReference>
<dbReference type="FunFam" id="2.60.260.20:FF:000004">
    <property type="entry name" value="Molecular chaperone DnaJ"/>
    <property type="match status" value="1"/>
</dbReference>
<dbReference type="Gene3D" id="1.10.287.110">
    <property type="entry name" value="DnaJ domain"/>
    <property type="match status" value="1"/>
</dbReference>
<dbReference type="Gene3D" id="2.10.230.10">
    <property type="entry name" value="Heat shock protein DnaJ, cysteine-rich domain"/>
    <property type="match status" value="1"/>
</dbReference>
<dbReference type="Gene3D" id="2.60.260.20">
    <property type="entry name" value="Urease metallochaperone UreE, N-terminal domain"/>
    <property type="match status" value="2"/>
</dbReference>
<dbReference type="HAMAP" id="MF_01152">
    <property type="entry name" value="DnaJ"/>
    <property type="match status" value="1"/>
</dbReference>
<dbReference type="InterPro" id="IPR012724">
    <property type="entry name" value="DnaJ"/>
</dbReference>
<dbReference type="InterPro" id="IPR002939">
    <property type="entry name" value="DnaJ_C"/>
</dbReference>
<dbReference type="InterPro" id="IPR001623">
    <property type="entry name" value="DnaJ_domain"/>
</dbReference>
<dbReference type="InterPro" id="IPR018253">
    <property type="entry name" value="DnaJ_domain_CS"/>
</dbReference>
<dbReference type="InterPro" id="IPR008971">
    <property type="entry name" value="HSP40/DnaJ_pept-bd"/>
</dbReference>
<dbReference type="InterPro" id="IPR001305">
    <property type="entry name" value="HSP_DnaJ_Cys-rich_dom"/>
</dbReference>
<dbReference type="InterPro" id="IPR036410">
    <property type="entry name" value="HSP_DnaJ_Cys-rich_dom_sf"/>
</dbReference>
<dbReference type="InterPro" id="IPR036869">
    <property type="entry name" value="J_dom_sf"/>
</dbReference>
<dbReference type="NCBIfam" id="TIGR02349">
    <property type="entry name" value="DnaJ_bact"/>
    <property type="match status" value="1"/>
</dbReference>
<dbReference type="NCBIfam" id="NF008035">
    <property type="entry name" value="PRK10767.1"/>
    <property type="match status" value="1"/>
</dbReference>
<dbReference type="PANTHER" id="PTHR43096:SF48">
    <property type="entry name" value="CHAPERONE PROTEIN DNAJ"/>
    <property type="match status" value="1"/>
</dbReference>
<dbReference type="PANTHER" id="PTHR43096">
    <property type="entry name" value="DNAJ HOMOLOG 1, MITOCHONDRIAL-RELATED"/>
    <property type="match status" value="1"/>
</dbReference>
<dbReference type="Pfam" id="PF00226">
    <property type="entry name" value="DnaJ"/>
    <property type="match status" value="1"/>
</dbReference>
<dbReference type="Pfam" id="PF01556">
    <property type="entry name" value="DnaJ_C"/>
    <property type="match status" value="1"/>
</dbReference>
<dbReference type="Pfam" id="PF00684">
    <property type="entry name" value="DnaJ_CXXCXGXG"/>
    <property type="match status" value="1"/>
</dbReference>
<dbReference type="PRINTS" id="PR00625">
    <property type="entry name" value="JDOMAIN"/>
</dbReference>
<dbReference type="SMART" id="SM00271">
    <property type="entry name" value="DnaJ"/>
    <property type="match status" value="1"/>
</dbReference>
<dbReference type="SUPFAM" id="SSF46565">
    <property type="entry name" value="Chaperone J-domain"/>
    <property type="match status" value="1"/>
</dbReference>
<dbReference type="SUPFAM" id="SSF57938">
    <property type="entry name" value="DnaJ/Hsp40 cysteine-rich domain"/>
    <property type="match status" value="1"/>
</dbReference>
<dbReference type="SUPFAM" id="SSF49493">
    <property type="entry name" value="HSP40/DnaJ peptide-binding domain"/>
    <property type="match status" value="2"/>
</dbReference>
<dbReference type="PROSITE" id="PS00636">
    <property type="entry name" value="DNAJ_1"/>
    <property type="match status" value="1"/>
</dbReference>
<dbReference type="PROSITE" id="PS50076">
    <property type="entry name" value="DNAJ_2"/>
    <property type="match status" value="1"/>
</dbReference>
<dbReference type="PROSITE" id="PS51188">
    <property type="entry name" value="ZF_CR"/>
    <property type="match status" value="1"/>
</dbReference>
<gene>
    <name evidence="1" type="primary">dnaJ</name>
    <name type="ordered locus">WP0222</name>
</gene>
<name>DNAJ_WOLPP</name>
<protein>
    <recommendedName>
        <fullName evidence="1">Chaperone protein DnaJ</fullName>
    </recommendedName>
</protein>